<evidence type="ECO:0000255" key="1">
    <source>
        <dbReference type="HAMAP-Rule" id="MF_01576"/>
    </source>
</evidence>
<gene>
    <name evidence="1" type="primary">folD</name>
    <name type="ordered locus">Rsph17029_2314</name>
</gene>
<sequence length="296" mass="30570">MTAKRIDGKAFAAGVRARVAEEVARLKEGHGIVPGLAVVLVGEDPASQVYVGAKGKQTVEVGMASFEHRLPAETSEAELLALIDRLNHDPAVHGILVQLPLPAHLNADLVINALDPAKDVDGFHISNVGRLGTGQKSMVPCTPLGCLMMLRDHLGTLSGLNAVVVGRSNIVGKPMAQLLLGESCTVTIAHSRTRDLAAVCRGADILVAAVGRPEMITGDFVKPGATVIDVGINRIERDGKTKLVGDVDYASAAEVAGAITPVPGGVGPMTIACLLANTLTACCRANGLPEPQGLTA</sequence>
<organism>
    <name type="scientific">Cereibacter sphaeroides (strain ATCC 17029 / ATH 2.4.9)</name>
    <name type="common">Rhodobacter sphaeroides</name>
    <dbReference type="NCBI Taxonomy" id="349101"/>
    <lineage>
        <taxon>Bacteria</taxon>
        <taxon>Pseudomonadati</taxon>
        <taxon>Pseudomonadota</taxon>
        <taxon>Alphaproteobacteria</taxon>
        <taxon>Rhodobacterales</taxon>
        <taxon>Paracoccaceae</taxon>
        <taxon>Cereibacter</taxon>
    </lineage>
</organism>
<reference key="1">
    <citation type="submission" date="2007-02" db="EMBL/GenBank/DDBJ databases">
        <title>Complete sequence of chromosome 1 of Rhodobacter sphaeroides ATCC 17029.</title>
        <authorList>
            <person name="Copeland A."/>
            <person name="Lucas S."/>
            <person name="Lapidus A."/>
            <person name="Barry K."/>
            <person name="Detter J.C."/>
            <person name="Glavina del Rio T."/>
            <person name="Hammon N."/>
            <person name="Israni S."/>
            <person name="Dalin E."/>
            <person name="Tice H."/>
            <person name="Pitluck S."/>
            <person name="Kiss H."/>
            <person name="Brettin T."/>
            <person name="Bruce D."/>
            <person name="Han C."/>
            <person name="Tapia R."/>
            <person name="Gilna P."/>
            <person name="Schmutz J."/>
            <person name="Larimer F."/>
            <person name="Land M."/>
            <person name="Hauser L."/>
            <person name="Kyrpides N."/>
            <person name="Mikhailova N."/>
            <person name="Richardson P."/>
            <person name="Mackenzie C."/>
            <person name="Choudhary M."/>
            <person name="Donohue T.J."/>
            <person name="Kaplan S."/>
        </authorList>
    </citation>
    <scope>NUCLEOTIDE SEQUENCE [LARGE SCALE GENOMIC DNA]</scope>
    <source>
        <strain>ATCC 17029 / ATH 2.4.9</strain>
    </source>
</reference>
<protein>
    <recommendedName>
        <fullName evidence="1">Bifunctional protein FolD</fullName>
    </recommendedName>
    <domain>
        <recommendedName>
            <fullName evidence="1">Methylenetetrahydrofolate dehydrogenase</fullName>
            <ecNumber evidence="1">1.5.1.5</ecNumber>
        </recommendedName>
    </domain>
    <domain>
        <recommendedName>
            <fullName evidence="1">Methenyltetrahydrofolate cyclohydrolase</fullName>
            <ecNumber evidence="1">3.5.4.9</ecNumber>
        </recommendedName>
    </domain>
</protein>
<name>FOLD_CERS1</name>
<comment type="function">
    <text evidence="1">Catalyzes the oxidation of 5,10-methylenetetrahydrofolate to 5,10-methenyltetrahydrofolate and then the hydrolysis of 5,10-methenyltetrahydrofolate to 10-formyltetrahydrofolate.</text>
</comment>
<comment type="catalytic activity">
    <reaction evidence="1">
        <text>(6R)-5,10-methylene-5,6,7,8-tetrahydrofolate + NADP(+) = (6R)-5,10-methenyltetrahydrofolate + NADPH</text>
        <dbReference type="Rhea" id="RHEA:22812"/>
        <dbReference type="ChEBI" id="CHEBI:15636"/>
        <dbReference type="ChEBI" id="CHEBI:57455"/>
        <dbReference type="ChEBI" id="CHEBI:57783"/>
        <dbReference type="ChEBI" id="CHEBI:58349"/>
        <dbReference type="EC" id="1.5.1.5"/>
    </reaction>
</comment>
<comment type="catalytic activity">
    <reaction evidence="1">
        <text>(6R)-5,10-methenyltetrahydrofolate + H2O = (6R)-10-formyltetrahydrofolate + H(+)</text>
        <dbReference type="Rhea" id="RHEA:23700"/>
        <dbReference type="ChEBI" id="CHEBI:15377"/>
        <dbReference type="ChEBI" id="CHEBI:15378"/>
        <dbReference type="ChEBI" id="CHEBI:57455"/>
        <dbReference type="ChEBI" id="CHEBI:195366"/>
        <dbReference type="EC" id="3.5.4.9"/>
    </reaction>
</comment>
<comment type="pathway">
    <text evidence="1">One-carbon metabolism; tetrahydrofolate interconversion.</text>
</comment>
<comment type="subunit">
    <text evidence="1">Homodimer.</text>
</comment>
<comment type="similarity">
    <text evidence="1">Belongs to the tetrahydrofolate dehydrogenase/cyclohydrolase family.</text>
</comment>
<dbReference type="EC" id="1.5.1.5" evidence="1"/>
<dbReference type="EC" id="3.5.4.9" evidence="1"/>
<dbReference type="EMBL" id="CP000577">
    <property type="protein sequence ID" value="ABN77416.1"/>
    <property type="molecule type" value="Genomic_DNA"/>
</dbReference>
<dbReference type="RefSeq" id="WP_011841592.1">
    <property type="nucleotide sequence ID" value="NC_009049.1"/>
</dbReference>
<dbReference type="SMR" id="A3PM50"/>
<dbReference type="KEGG" id="rsh:Rsph17029_2314"/>
<dbReference type="HOGENOM" id="CLU_034045_1_2_5"/>
<dbReference type="UniPathway" id="UPA00193"/>
<dbReference type="GO" id="GO:0005829">
    <property type="term" value="C:cytosol"/>
    <property type="evidence" value="ECO:0007669"/>
    <property type="project" value="TreeGrafter"/>
</dbReference>
<dbReference type="GO" id="GO:0004477">
    <property type="term" value="F:methenyltetrahydrofolate cyclohydrolase activity"/>
    <property type="evidence" value="ECO:0007669"/>
    <property type="project" value="UniProtKB-UniRule"/>
</dbReference>
<dbReference type="GO" id="GO:0004488">
    <property type="term" value="F:methylenetetrahydrofolate dehydrogenase (NADP+) activity"/>
    <property type="evidence" value="ECO:0007669"/>
    <property type="project" value="UniProtKB-UniRule"/>
</dbReference>
<dbReference type="GO" id="GO:0000105">
    <property type="term" value="P:L-histidine biosynthetic process"/>
    <property type="evidence" value="ECO:0007669"/>
    <property type="project" value="UniProtKB-KW"/>
</dbReference>
<dbReference type="GO" id="GO:0009086">
    <property type="term" value="P:methionine biosynthetic process"/>
    <property type="evidence" value="ECO:0007669"/>
    <property type="project" value="UniProtKB-KW"/>
</dbReference>
<dbReference type="GO" id="GO:0006164">
    <property type="term" value="P:purine nucleotide biosynthetic process"/>
    <property type="evidence" value="ECO:0007669"/>
    <property type="project" value="UniProtKB-KW"/>
</dbReference>
<dbReference type="GO" id="GO:0035999">
    <property type="term" value="P:tetrahydrofolate interconversion"/>
    <property type="evidence" value="ECO:0007669"/>
    <property type="project" value="UniProtKB-UniRule"/>
</dbReference>
<dbReference type="CDD" id="cd01080">
    <property type="entry name" value="NAD_bind_m-THF_DH_Cyclohyd"/>
    <property type="match status" value="1"/>
</dbReference>
<dbReference type="FunFam" id="3.40.50.720:FF:000006">
    <property type="entry name" value="Bifunctional protein FolD"/>
    <property type="match status" value="1"/>
</dbReference>
<dbReference type="FunFam" id="3.40.50.10860:FF:000005">
    <property type="entry name" value="C-1-tetrahydrofolate synthase, cytoplasmic, putative"/>
    <property type="match status" value="1"/>
</dbReference>
<dbReference type="Gene3D" id="3.40.50.10860">
    <property type="entry name" value="Leucine Dehydrogenase, chain A, domain 1"/>
    <property type="match status" value="1"/>
</dbReference>
<dbReference type="Gene3D" id="3.40.50.720">
    <property type="entry name" value="NAD(P)-binding Rossmann-like Domain"/>
    <property type="match status" value="1"/>
</dbReference>
<dbReference type="HAMAP" id="MF_01576">
    <property type="entry name" value="THF_DHG_CYH"/>
    <property type="match status" value="1"/>
</dbReference>
<dbReference type="InterPro" id="IPR046346">
    <property type="entry name" value="Aminoacid_DH-like_N_sf"/>
</dbReference>
<dbReference type="InterPro" id="IPR036291">
    <property type="entry name" value="NAD(P)-bd_dom_sf"/>
</dbReference>
<dbReference type="InterPro" id="IPR000672">
    <property type="entry name" value="THF_DH/CycHdrlase"/>
</dbReference>
<dbReference type="InterPro" id="IPR020630">
    <property type="entry name" value="THF_DH/CycHdrlase_cat_dom"/>
</dbReference>
<dbReference type="InterPro" id="IPR020867">
    <property type="entry name" value="THF_DH/CycHdrlase_CS"/>
</dbReference>
<dbReference type="InterPro" id="IPR020631">
    <property type="entry name" value="THF_DH/CycHdrlase_NAD-bd_dom"/>
</dbReference>
<dbReference type="NCBIfam" id="NF008058">
    <property type="entry name" value="PRK10792.1"/>
    <property type="match status" value="1"/>
</dbReference>
<dbReference type="NCBIfam" id="NF010783">
    <property type="entry name" value="PRK14186.1"/>
    <property type="match status" value="1"/>
</dbReference>
<dbReference type="NCBIfam" id="NF010785">
    <property type="entry name" value="PRK14188.1"/>
    <property type="match status" value="1"/>
</dbReference>
<dbReference type="PANTHER" id="PTHR48099:SF5">
    <property type="entry name" value="C-1-TETRAHYDROFOLATE SYNTHASE, CYTOPLASMIC"/>
    <property type="match status" value="1"/>
</dbReference>
<dbReference type="PANTHER" id="PTHR48099">
    <property type="entry name" value="C-1-TETRAHYDROFOLATE SYNTHASE, CYTOPLASMIC-RELATED"/>
    <property type="match status" value="1"/>
</dbReference>
<dbReference type="Pfam" id="PF00763">
    <property type="entry name" value="THF_DHG_CYH"/>
    <property type="match status" value="1"/>
</dbReference>
<dbReference type="Pfam" id="PF02882">
    <property type="entry name" value="THF_DHG_CYH_C"/>
    <property type="match status" value="1"/>
</dbReference>
<dbReference type="PRINTS" id="PR00085">
    <property type="entry name" value="THFDHDRGNASE"/>
</dbReference>
<dbReference type="SUPFAM" id="SSF53223">
    <property type="entry name" value="Aminoacid dehydrogenase-like, N-terminal domain"/>
    <property type="match status" value="1"/>
</dbReference>
<dbReference type="SUPFAM" id="SSF51735">
    <property type="entry name" value="NAD(P)-binding Rossmann-fold domains"/>
    <property type="match status" value="1"/>
</dbReference>
<dbReference type="PROSITE" id="PS00766">
    <property type="entry name" value="THF_DHG_CYH_1"/>
    <property type="match status" value="1"/>
</dbReference>
<dbReference type="PROSITE" id="PS00767">
    <property type="entry name" value="THF_DHG_CYH_2"/>
    <property type="match status" value="1"/>
</dbReference>
<feature type="chain" id="PRO_0000305871" description="Bifunctional protein FolD">
    <location>
        <begin position="1"/>
        <end position="296"/>
    </location>
</feature>
<feature type="binding site" evidence="1">
    <location>
        <begin position="166"/>
        <end position="168"/>
    </location>
    <ligand>
        <name>NADP(+)</name>
        <dbReference type="ChEBI" id="CHEBI:58349"/>
    </ligand>
</feature>
<feature type="binding site" evidence="1">
    <location>
        <position position="191"/>
    </location>
    <ligand>
        <name>NADP(+)</name>
        <dbReference type="ChEBI" id="CHEBI:58349"/>
    </ligand>
</feature>
<feature type="binding site" evidence="1">
    <location>
        <position position="232"/>
    </location>
    <ligand>
        <name>NADP(+)</name>
        <dbReference type="ChEBI" id="CHEBI:58349"/>
    </ligand>
</feature>
<accession>A3PM50</accession>
<proteinExistence type="inferred from homology"/>
<keyword id="KW-0028">Amino-acid biosynthesis</keyword>
<keyword id="KW-0368">Histidine biosynthesis</keyword>
<keyword id="KW-0378">Hydrolase</keyword>
<keyword id="KW-0486">Methionine biosynthesis</keyword>
<keyword id="KW-0511">Multifunctional enzyme</keyword>
<keyword id="KW-0521">NADP</keyword>
<keyword id="KW-0554">One-carbon metabolism</keyword>
<keyword id="KW-0560">Oxidoreductase</keyword>
<keyword id="KW-0658">Purine biosynthesis</keyword>